<organism>
    <name type="scientific">Zymomonas mobilis subsp. mobilis (strain ATCC 31821 / ZM4 / CP4)</name>
    <dbReference type="NCBI Taxonomy" id="264203"/>
    <lineage>
        <taxon>Bacteria</taxon>
        <taxon>Pseudomonadati</taxon>
        <taxon>Pseudomonadota</taxon>
        <taxon>Alphaproteobacteria</taxon>
        <taxon>Sphingomonadales</taxon>
        <taxon>Zymomonadaceae</taxon>
        <taxon>Zymomonas</taxon>
    </lineage>
</organism>
<reference key="1">
    <citation type="journal article" date="2005" name="Nat. Biotechnol.">
        <title>The genome sequence of the ethanologenic bacterium Zymomonas mobilis ZM4.</title>
        <authorList>
            <person name="Seo J.-S."/>
            <person name="Chong H."/>
            <person name="Park H.S."/>
            <person name="Yoon K.-O."/>
            <person name="Jung C."/>
            <person name="Kim J.J."/>
            <person name="Hong J.H."/>
            <person name="Kim H."/>
            <person name="Kim J.-H."/>
            <person name="Kil J.-I."/>
            <person name="Park C.J."/>
            <person name="Oh H.-M."/>
            <person name="Lee J.-S."/>
            <person name="Jin S.-J."/>
            <person name="Um H.-W."/>
            <person name="Lee H.-J."/>
            <person name="Oh S.-J."/>
            <person name="Kim J.Y."/>
            <person name="Kang H.L."/>
            <person name="Lee S.Y."/>
            <person name="Lee K.J."/>
            <person name="Kang H.S."/>
        </authorList>
    </citation>
    <scope>NUCLEOTIDE SEQUENCE [LARGE SCALE GENOMIC DNA]</scope>
    <source>
        <strain>ATCC 31821 / ZM4 / CP4</strain>
    </source>
</reference>
<protein>
    <recommendedName>
        <fullName evidence="1">Sulfite reductase [NADPH] hemoprotein beta-component</fullName>
        <shortName evidence="1">SiR-HP</shortName>
        <shortName evidence="1">SiRHP</shortName>
        <ecNumber evidence="1">1.8.1.2</ecNumber>
    </recommendedName>
</protein>
<accession>Q5NRM2</accession>
<feature type="chain" id="PRO_0000199919" description="Sulfite reductase [NADPH] hemoprotein beta-component">
    <location>
        <begin position="1"/>
        <end position="570"/>
    </location>
</feature>
<feature type="binding site" evidence="1">
    <location>
        <position position="434"/>
    </location>
    <ligand>
        <name>[4Fe-4S] cluster</name>
        <dbReference type="ChEBI" id="CHEBI:49883"/>
    </ligand>
</feature>
<feature type="binding site" evidence="1">
    <location>
        <position position="440"/>
    </location>
    <ligand>
        <name>[4Fe-4S] cluster</name>
        <dbReference type="ChEBI" id="CHEBI:49883"/>
    </ligand>
</feature>
<feature type="binding site" evidence="1">
    <location>
        <position position="479"/>
    </location>
    <ligand>
        <name>[4Fe-4S] cluster</name>
        <dbReference type="ChEBI" id="CHEBI:49883"/>
    </ligand>
</feature>
<feature type="binding site" evidence="1">
    <location>
        <position position="483"/>
    </location>
    <ligand>
        <name>[4Fe-4S] cluster</name>
        <dbReference type="ChEBI" id="CHEBI:49883"/>
    </ligand>
</feature>
<feature type="binding site" description="axial binding residue" evidence="1">
    <location>
        <position position="483"/>
    </location>
    <ligand>
        <name>siroheme</name>
        <dbReference type="ChEBI" id="CHEBI:60052"/>
    </ligand>
    <ligandPart>
        <name>Fe</name>
        <dbReference type="ChEBI" id="CHEBI:18248"/>
    </ligandPart>
</feature>
<sequence length="570" mass="64064">MTQKHPQTLVVDAPLSDAERLKRESNFLRGTIAEDLNDGLTGGFNGDNSTLIRFHGMYQQDDRDIRAERAEEKLEPRYAMMLRCRLPGGIISPEQWLKMDSFASEKTLYGSIRLTNRQTFQFHGILKKDLKTVHHLLHESGLDSLATANDVNRNVLCTSNPVESDLHAEAYEWAKKISEHLLPQTHAYAEIWLDQEKLATTDQEPILGATYLPRKFKTTVVIPPQNDVDIYANDLNFIAISENDQLVGFNVLIGGGLSITIGDKTTHPGVAKDIGYIEKEKVLAVAEAVVTTQRDWGNRSNRKNARLRYTLERVGLDVFKAEVEKRAGVTFEASRPFTLTGRGDRFGWVKGIDNQWHLTLFVENGRLLDYPHRPLKSGIAEIAKVHKGDFRLTANQNLIVAGVSEEDKDTIEKIARDHGLLENISELRKNSMACVSFPTCPLAMAEAERFLPNFLTKVEAVMTKYDIADEYIVFRTTGCPNNCGRSLLAEIGLVGRAIGRYNLYIGGDRVGTRIPRLFRENITEDEILSEVDSLIGRWAKERDGKEAFGDFVVRAGIVKAVTDPAIDFYD</sequence>
<name>CYSI_ZYMMO</name>
<gene>
    <name evidence="1" type="primary">cysI</name>
    <name type="ordered locus">ZMO0008</name>
</gene>
<proteinExistence type="inferred from homology"/>
<comment type="function">
    <text evidence="1">Component of the sulfite reductase complex that catalyzes the 6-electron reduction of sulfite to sulfide. This is one of several activities required for the biosynthesis of L-cysteine from sulfate.</text>
</comment>
<comment type="catalytic activity">
    <reaction evidence="1">
        <text>hydrogen sulfide + 3 NADP(+) + 3 H2O = sulfite + 3 NADPH + 4 H(+)</text>
        <dbReference type="Rhea" id="RHEA:13801"/>
        <dbReference type="ChEBI" id="CHEBI:15377"/>
        <dbReference type="ChEBI" id="CHEBI:15378"/>
        <dbReference type="ChEBI" id="CHEBI:17359"/>
        <dbReference type="ChEBI" id="CHEBI:29919"/>
        <dbReference type="ChEBI" id="CHEBI:57783"/>
        <dbReference type="ChEBI" id="CHEBI:58349"/>
        <dbReference type="EC" id="1.8.1.2"/>
    </reaction>
</comment>
<comment type="cofactor">
    <cofactor evidence="1">
        <name>siroheme</name>
        <dbReference type="ChEBI" id="CHEBI:60052"/>
    </cofactor>
    <text evidence="1">Binds 1 siroheme per subunit.</text>
</comment>
<comment type="cofactor">
    <cofactor evidence="1">
        <name>[4Fe-4S] cluster</name>
        <dbReference type="ChEBI" id="CHEBI:49883"/>
    </cofactor>
    <text evidence="1">Binds 1 [4Fe-4S] cluster per subunit.</text>
</comment>
<comment type="pathway">
    <text evidence="1">Sulfur metabolism; hydrogen sulfide biosynthesis; hydrogen sulfide from sulfite (NADPH route): step 1/1.</text>
</comment>
<comment type="subunit">
    <text evidence="1">Alpha(8)-beta(8). The alpha component is a flavoprotein, the beta component is a hemoprotein.</text>
</comment>
<comment type="similarity">
    <text evidence="1">Belongs to the nitrite and sulfite reductase 4Fe-4S domain family.</text>
</comment>
<keyword id="KW-0004">4Fe-4S</keyword>
<keyword id="KW-0028">Amino-acid biosynthesis</keyword>
<keyword id="KW-0198">Cysteine biosynthesis</keyword>
<keyword id="KW-0349">Heme</keyword>
<keyword id="KW-0408">Iron</keyword>
<keyword id="KW-0411">Iron-sulfur</keyword>
<keyword id="KW-0479">Metal-binding</keyword>
<keyword id="KW-0521">NADP</keyword>
<keyword id="KW-0560">Oxidoreductase</keyword>
<keyword id="KW-1185">Reference proteome</keyword>
<dbReference type="EC" id="1.8.1.2" evidence="1"/>
<dbReference type="EMBL" id="AE008692">
    <property type="protein sequence ID" value="AAV88632.1"/>
    <property type="molecule type" value="Genomic_DNA"/>
</dbReference>
<dbReference type="RefSeq" id="WP_011239996.1">
    <property type="nucleotide sequence ID" value="NZ_CP035711.1"/>
</dbReference>
<dbReference type="SMR" id="Q5NRM2"/>
<dbReference type="STRING" id="264203.ZMO0008"/>
<dbReference type="KEGG" id="zmo:ZMO0008"/>
<dbReference type="eggNOG" id="COG0155">
    <property type="taxonomic scope" value="Bacteria"/>
</dbReference>
<dbReference type="HOGENOM" id="CLU_001975_3_2_5"/>
<dbReference type="UniPathway" id="UPA00140">
    <property type="reaction ID" value="UER00207"/>
</dbReference>
<dbReference type="Proteomes" id="UP000001173">
    <property type="component" value="Chromosome"/>
</dbReference>
<dbReference type="GO" id="GO:0009337">
    <property type="term" value="C:sulfite reductase complex (NADPH)"/>
    <property type="evidence" value="ECO:0007669"/>
    <property type="project" value="InterPro"/>
</dbReference>
<dbReference type="GO" id="GO:0051539">
    <property type="term" value="F:4 iron, 4 sulfur cluster binding"/>
    <property type="evidence" value="ECO:0007669"/>
    <property type="project" value="UniProtKB-KW"/>
</dbReference>
<dbReference type="GO" id="GO:0020037">
    <property type="term" value="F:heme binding"/>
    <property type="evidence" value="ECO:0007669"/>
    <property type="project" value="InterPro"/>
</dbReference>
<dbReference type="GO" id="GO:0046872">
    <property type="term" value="F:metal ion binding"/>
    <property type="evidence" value="ECO:0007669"/>
    <property type="project" value="UniProtKB-KW"/>
</dbReference>
<dbReference type="GO" id="GO:0050661">
    <property type="term" value="F:NADP binding"/>
    <property type="evidence" value="ECO:0007669"/>
    <property type="project" value="InterPro"/>
</dbReference>
<dbReference type="GO" id="GO:0050311">
    <property type="term" value="F:sulfite reductase (ferredoxin) activity"/>
    <property type="evidence" value="ECO:0007669"/>
    <property type="project" value="TreeGrafter"/>
</dbReference>
<dbReference type="GO" id="GO:0004783">
    <property type="term" value="F:sulfite reductase (NADPH) activity"/>
    <property type="evidence" value="ECO:0007669"/>
    <property type="project" value="UniProtKB-UniRule"/>
</dbReference>
<dbReference type="GO" id="GO:0019344">
    <property type="term" value="P:cysteine biosynthetic process"/>
    <property type="evidence" value="ECO:0007669"/>
    <property type="project" value="UniProtKB-KW"/>
</dbReference>
<dbReference type="GO" id="GO:0070814">
    <property type="term" value="P:hydrogen sulfide biosynthetic process"/>
    <property type="evidence" value="ECO:0007669"/>
    <property type="project" value="UniProtKB-UniRule"/>
</dbReference>
<dbReference type="GO" id="GO:0000103">
    <property type="term" value="P:sulfate assimilation"/>
    <property type="evidence" value="ECO:0007669"/>
    <property type="project" value="UniProtKB-UniRule"/>
</dbReference>
<dbReference type="FunFam" id="3.30.413.10:FF:000003">
    <property type="entry name" value="Sulfite reductase [NADPH] hemoprotein beta-component"/>
    <property type="match status" value="1"/>
</dbReference>
<dbReference type="FunFam" id="3.30.413.10:FF:000004">
    <property type="entry name" value="Sulfite reductase [NADPH] hemoprotein beta-component"/>
    <property type="match status" value="1"/>
</dbReference>
<dbReference type="Gene3D" id="3.30.413.10">
    <property type="entry name" value="Sulfite Reductase Hemoprotein, domain 1"/>
    <property type="match status" value="2"/>
</dbReference>
<dbReference type="HAMAP" id="MF_01540">
    <property type="entry name" value="CysI"/>
    <property type="match status" value="1"/>
</dbReference>
<dbReference type="InterPro" id="IPR011786">
    <property type="entry name" value="CysI"/>
</dbReference>
<dbReference type="InterPro" id="IPR005117">
    <property type="entry name" value="NiRdtase/SiRdtase_haem-b_fer"/>
</dbReference>
<dbReference type="InterPro" id="IPR036136">
    <property type="entry name" value="Nit/Sulf_reduc_fer-like_dom_sf"/>
</dbReference>
<dbReference type="InterPro" id="IPR006067">
    <property type="entry name" value="NO2/SO3_Rdtase_4Fe4S_dom"/>
</dbReference>
<dbReference type="InterPro" id="IPR045169">
    <property type="entry name" value="NO2/SO3_Rdtase_4Fe4S_prot"/>
</dbReference>
<dbReference type="InterPro" id="IPR045854">
    <property type="entry name" value="NO2/SO3_Rdtase_4Fe4S_sf"/>
</dbReference>
<dbReference type="InterPro" id="IPR006066">
    <property type="entry name" value="NO2/SO3_Rdtase_FeS/sirohaem_BS"/>
</dbReference>
<dbReference type="NCBIfam" id="TIGR02041">
    <property type="entry name" value="CysI"/>
    <property type="match status" value="1"/>
</dbReference>
<dbReference type="NCBIfam" id="NF010029">
    <property type="entry name" value="PRK13504.1"/>
    <property type="match status" value="1"/>
</dbReference>
<dbReference type="PANTHER" id="PTHR11493:SF47">
    <property type="entry name" value="SULFITE REDUCTASE [NADPH] SUBUNIT BETA"/>
    <property type="match status" value="1"/>
</dbReference>
<dbReference type="PANTHER" id="PTHR11493">
    <property type="entry name" value="SULFITE REDUCTASE [NADPH] SUBUNIT BETA-RELATED"/>
    <property type="match status" value="1"/>
</dbReference>
<dbReference type="Pfam" id="PF01077">
    <property type="entry name" value="NIR_SIR"/>
    <property type="match status" value="1"/>
</dbReference>
<dbReference type="Pfam" id="PF03460">
    <property type="entry name" value="NIR_SIR_ferr"/>
    <property type="match status" value="2"/>
</dbReference>
<dbReference type="PRINTS" id="PR00397">
    <property type="entry name" value="SIROHAEM"/>
</dbReference>
<dbReference type="SUPFAM" id="SSF56014">
    <property type="entry name" value="Nitrite and sulphite reductase 4Fe-4S domain-like"/>
    <property type="match status" value="2"/>
</dbReference>
<dbReference type="SUPFAM" id="SSF55124">
    <property type="entry name" value="Nitrite/Sulfite reductase N-terminal domain-like"/>
    <property type="match status" value="2"/>
</dbReference>
<dbReference type="PROSITE" id="PS00365">
    <property type="entry name" value="NIR_SIR"/>
    <property type="match status" value="1"/>
</dbReference>
<evidence type="ECO:0000255" key="1">
    <source>
        <dbReference type="HAMAP-Rule" id="MF_01540"/>
    </source>
</evidence>